<name>PQQE_XANCB</name>
<keyword id="KW-0004">4Fe-4S</keyword>
<keyword id="KW-0408">Iron</keyword>
<keyword id="KW-0411">Iron-sulfur</keyword>
<keyword id="KW-0479">Metal-binding</keyword>
<keyword id="KW-0560">Oxidoreductase</keyword>
<keyword id="KW-0884">PQQ biosynthesis</keyword>
<keyword id="KW-0949">S-adenosyl-L-methionine</keyword>
<organism>
    <name type="scientific">Xanthomonas campestris pv. campestris (strain B100)</name>
    <dbReference type="NCBI Taxonomy" id="509169"/>
    <lineage>
        <taxon>Bacteria</taxon>
        <taxon>Pseudomonadati</taxon>
        <taxon>Pseudomonadota</taxon>
        <taxon>Gammaproteobacteria</taxon>
        <taxon>Lysobacterales</taxon>
        <taxon>Lysobacteraceae</taxon>
        <taxon>Xanthomonas</taxon>
    </lineage>
</organism>
<reference key="1">
    <citation type="journal article" date="2008" name="J. Biotechnol.">
        <title>The genome of Xanthomonas campestris pv. campestris B100 and its use for the reconstruction of metabolic pathways involved in xanthan biosynthesis.</title>
        <authorList>
            <person name="Vorhoelter F.-J."/>
            <person name="Schneiker S."/>
            <person name="Goesmann A."/>
            <person name="Krause L."/>
            <person name="Bekel T."/>
            <person name="Kaiser O."/>
            <person name="Linke B."/>
            <person name="Patschkowski T."/>
            <person name="Rueckert C."/>
            <person name="Schmid J."/>
            <person name="Sidhu V.K."/>
            <person name="Sieber V."/>
            <person name="Tauch A."/>
            <person name="Watt S.A."/>
            <person name="Weisshaar B."/>
            <person name="Becker A."/>
            <person name="Niehaus K."/>
            <person name="Puehler A."/>
        </authorList>
    </citation>
    <scope>NUCLEOTIDE SEQUENCE [LARGE SCALE GENOMIC DNA]</scope>
    <source>
        <strain>B100</strain>
    </source>
</reference>
<gene>
    <name evidence="1" type="primary">pqqE</name>
    <name type="ordered locus">xcc-b100_1212</name>
</gene>
<sequence length="376" mass="40761">MSTVPPPLSVLLELTHRCPLACPYCSNPIALAALREEMDTAGWRSLLEQAAEMGVLQAHFSGGEPMLRKDLPELVAHARALGLYSNLITSGVAGGEPMLDQLQAAGLEHVQLSVQDVDPAGADHIAGYRNSLSKKRAFAAAVRARGLPLTLNAVIHRHNAERVPGMIALALEWGAERIEVAHTQYYGWGLRNRAALMPSREQLAATIVAVETARRSLGDQLAIDFVTPDYYARQPKPCMGGWAQRFVNISPRGDVLPCHAAETIDGLQFEKLRDRSLADIWNHGEAFARFRGTAWMPEVCQGCPKREIDWGGCRCQALALAGDAATLDPVCERSPAHAGIRATAEREAASPAPDFIYRRPERPAAVAAEAAISDTE</sequence>
<protein>
    <recommendedName>
        <fullName evidence="1">PqqA peptide cyclase</fullName>
        <ecNumber evidence="1">1.21.98.4</ecNumber>
    </recommendedName>
    <alternativeName>
        <fullName evidence="1">Coenzyme PQQ synthesis protein E</fullName>
    </alternativeName>
    <alternativeName>
        <fullName evidence="1">Pyrroloquinoline quinone biosynthesis protein E</fullName>
    </alternativeName>
</protein>
<accession>B0RQ25</accession>
<dbReference type="EC" id="1.21.98.4" evidence="1"/>
<dbReference type="EMBL" id="AM920689">
    <property type="protein sequence ID" value="CAP50560.1"/>
    <property type="molecule type" value="Genomic_DNA"/>
</dbReference>
<dbReference type="SMR" id="B0RQ25"/>
<dbReference type="KEGG" id="xca:xcc-b100_1212"/>
<dbReference type="HOGENOM" id="CLU_009273_4_7_6"/>
<dbReference type="UniPathway" id="UPA00539"/>
<dbReference type="Proteomes" id="UP000001188">
    <property type="component" value="Chromosome"/>
</dbReference>
<dbReference type="GO" id="GO:0051539">
    <property type="term" value="F:4 iron, 4 sulfur cluster binding"/>
    <property type="evidence" value="ECO:0007669"/>
    <property type="project" value="UniProtKB-KW"/>
</dbReference>
<dbReference type="GO" id="GO:0009975">
    <property type="term" value="F:cyclase activity"/>
    <property type="evidence" value="ECO:0007669"/>
    <property type="project" value="UniProtKB-UniRule"/>
</dbReference>
<dbReference type="GO" id="GO:0005506">
    <property type="term" value="F:iron ion binding"/>
    <property type="evidence" value="ECO:0007669"/>
    <property type="project" value="UniProtKB-UniRule"/>
</dbReference>
<dbReference type="GO" id="GO:0016491">
    <property type="term" value="F:oxidoreductase activity"/>
    <property type="evidence" value="ECO:0007669"/>
    <property type="project" value="UniProtKB-KW"/>
</dbReference>
<dbReference type="GO" id="GO:1904047">
    <property type="term" value="F:S-adenosyl-L-methionine binding"/>
    <property type="evidence" value="ECO:0007669"/>
    <property type="project" value="UniProtKB-UniRule"/>
</dbReference>
<dbReference type="GO" id="GO:0018189">
    <property type="term" value="P:pyrroloquinoline quinone biosynthetic process"/>
    <property type="evidence" value="ECO:0007669"/>
    <property type="project" value="UniProtKB-UniRule"/>
</dbReference>
<dbReference type="CDD" id="cd01335">
    <property type="entry name" value="Radical_SAM"/>
    <property type="match status" value="1"/>
</dbReference>
<dbReference type="CDD" id="cd21119">
    <property type="entry name" value="SPASM_PqqE"/>
    <property type="match status" value="1"/>
</dbReference>
<dbReference type="Gene3D" id="3.20.20.70">
    <property type="entry name" value="Aldolase class I"/>
    <property type="match status" value="1"/>
</dbReference>
<dbReference type="HAMAP" id="MF_00660">
    <property type="entry name" value="PqqE"/>
    <property type="match status" value="1"/>
</dbReference>
<dbReference type="InterPro" id="IPR023885">
    <property type="entry name" value="4Fe4S-binding_SPASM_dom"/>
</dbReference>
<dbReference type="InterPro" id="IPR013785">
    <property type="entry name" value="Aldolase_TIM"/>
</dbReference>
<dbReference type="InterPro" id="IPR011843">
    <property type="entry name" value="PQQ_synth_PqqE_bac"/>
</dbReference>
<dbReference type="InterPro" id="IPR017200">
    <property type="entry name" value="PqqE-like"/>
</dbReference>
<dbReference type="InterPro" id="IPR050377">
    <property type="entry name" value="Radical_SAM_PqqE_MftC-like"/>
</dbReference>
<dbReference type="InterPro" id="IPR007197">
    <property type="entry name" value="rSAM"/>
</dbReference>
<dbReference type="NCBIfam" id="TIGR02109">
    <property type="entry name" value="PQQ_syn_pqqE"/>
    <property type="match status" value="1"/>
</dbReference>
<dbReference type="NCBIfam" id="TIGR04085">
    <property type="entry name" value="rSAM_more_4Fe4S"/>
    <property type="match status" value="1"/>
</dbReference>
<dbReference type="PANTHER" id="PTHR11228:SF7">
    <property type="entry name" value="PQQA PEPTIDE CYCLASE"/>
    <property type="match status" value="1"/>
</dbReference>
<dbReference type="PANTHER" id="PTHR11228">
    <property type="entry name" value="RADICAL SAM DOMAIN PROTEIN"/>
    <property type="match status" value="1"/>
</dbReference>
<dbReference type="Pfam" id="PF04055">
    <property type="entry name" value="Radical_SAM"/>
    <property type="match status" value="1"/>
</dbReference>
<dbReference type="Pfam" id="PF13186">
    <property type="entry name" value="SPASM"/>
    <property type="match status" value="1"/>
</dbReference>
<dbReference type="PIRSF" id="PIRSF037420">
    <property type="entry name" value="PQQ_syn_pqqE"/>
    <property type="match status" value="1"/>
</dbReference>
<dbReference type="SFLD" id="SFLDF00280">
    <property type="entry name" value="coenzyme_PQQ_synthesis_protein"/>
    <property type="match status" value="1"/>
</dbReference>
<dbReference type="SFLD" id="SFLDS00029">
    <property type="entry name" value="Radical_SAM"/>
    <property type="match status" value="1"/>
</dbReference>
<dbReference type="SUPFAM" id="SSF102114">
    <property type="entry name" value="Radical SAM enzymes"/>
    <property type="match status" value="1"/>
</dbReference>
<dbReference type="PROSITE" id="PS51918">
    <property type="entry name" value="RADICAL_SAM"/>
    <property type="match status" value="1"/>
</dbReference>
<comment type="function">
    <text evidence="1">Catalyzes the cross-linking of a glutamate residue and a tyrosine residue in the PqqA protein as part of the biosynthesis of pyrroloquinoline quinone (PQQ).</text>
</comment>
<comment type="catalytic activity">
    <reaction evidence="1">
        <text>[PQQ precursor protein] + S-adenosyl-L-methionine = E-Y cross-linked-[PQQ precursor protein] + 5'-deoxyadenosine + L-methionine + H(+)</text>
        <dbReference type="Rhea" id="RHEA:56836"/>
        <dbReference type="Rhea" id="RHEA-COMP:14800"/>
        <dbReference type="Rhea" id="RHEA-COMP:14801"/>
        <dbReference type="ChEBI" id="CHEBI:15378"/>
        <dbReference type="ChEBI" id="CHEBI:17319"/>
        <dbReference type="ChEBI" id="CHEBI:57844"/>
        <dbReference type="ChEBI" id="CHEBI:59789"/>
        <dbReference type="ChEBI" id="CHEBI:141026"/>
        <dbReference type="ChEBI" id="CHEBI:141027"/>
        <dbReference type="EC" id="1.21.98.4"/>
    </reaction>
</comment>
<comment type="cofactor">
    <cofactor evidence="1">
        <name>[4Fe-4S] cluster</name>
        <dbReference type="ChEBI" id="CHEBI:49883"/>
    </cofactor>
    <text evidence="1">Binds 1 [4Fe-4S] cluster. The cluster is coordinated with 3 cysteines and an exchangeable S-adenosyl-L-methionine.</text>
</comment>
<comment type="pathway">
    <text evidence="1">Cofactor biosynthesis; pyrroloquinoline quinone biosynthesis.</text>
</comment>
<comment type="subunit">
    <text evidence="1">Interacts with PqqD. The interaction is necessary for activity of PqqE.</text>
</comment>
<comment type="similarity">
    <text evidence="1">Belongs to the radical SAM superfamily. PqqE family.</text>
</comment>
<proteinExistence type="inferred from homology"/>
<evidence type="ECO:0000255" key="1">
    <source>
        <dbReference type="HAMAP-Rule" id="MF_00660"/>
    </source>
</evidence>
<evidence type="ECO:0000255" key="2">
    <source>
        <dbReference type="PROSITE-ProRule" id="PRU01266"/>
    </source>
</evidence>
<feature type="chain" id="PRO_1000131283" description="PqqA peptide cyclase">
    <location>
        <begin position="1"/>
        <end position="376"/>
    </location>
</feature>
<feature type="domain" description="Radical SAM core" evidence="2">
    <location>
        <begin position="4"/>
        <end position="219"/>
    </location>
</feature>
<feature type="binding site" evidence="1">
    <location>
        <position position="18"/>
    </location>
    <ligand>
        <name>[4Fe-4S] cluster</name>
        <dbReference type="ChEBI" id="CHEBI:49883"/>
        <note>4Fe-4S-S-AdoMet</note>
    </ligand>
</feature>
<feature type="binding site" evidence="1">
    <location>
        <position position="22"/>
    </location>
    <ligand>
        <name>[4Fe-4S] cluster</name>
        <dbReference type="ChEBI" id="CHEBI:49883"/>
        <note>4Fe-4S-S-AdoMet</note>
    </ligand>
</feature>
<feature type="binding site" evidence="1">
    <location>
        <position position="25"/>
    </location>
    <ligand>
        <name>[4Fe-4S] cluster</name>
        <dbReference type="ChEBI" id="CHEBI:49883"/>
        <note>4Fe-4S-S-AdoMet</note>
    </ligand>
</feature>